<reference key="1">
    <citation type="journal article" date="2005" name="Science">
        <title>Life at depth: Photobacterium profundum genome sequence and expression analysis.</title>
        <authorList>
            <person name="Vezzi A."/>
            <person name="Campanaro S."/>
            <person name="D'Angelo M."/>
            <person name="Simonato F."/>
            <person name="Vitulo N."/>
            <person name="Lauro F.M."/>
            <person name="Cestaro A."/>
            <person name="Malacrida G."/>
            <person name="Simionati B."/>
            <person name="Cannata N."/>
            <person name="Romualdi C."/>
            <person name="Bartlett D.H."/>
            <person name="Valle G."/>
        </authorList>
    </citation>
    <scope>NUCLEOTIDE SEQUENCE [LARGE SCALE GENOMIC DNA]</scope>
    <source>
        <strain>ATCC BAA-1253 / SS9</strain>
    </source>
</reference>
<sequence>MFEQNLTSEALTVTTVTSQDQITQKPLRDSVKASLKNYLAQLNGQEVDDLYELVLAEVEQPLLDTIMQYTRGNQTRAATMMGINRGTLRKKLKKYGMN</sequence>
<accession>Q6LLY3</accession>
<gene>
    <name evidence="1" type="primary">fis</name>
    <name type="ordered locus">PBPRA3411</name>
</gene>
<comment type="function">
    <text evidence="1">Activates ribosomal RNA transcription. Plays a direct role in upstream activation of rRNA promoters.</text>
</comment>
<comment type="subunit">
    <text evidence="1">Homodimer.</text>
</comment>
<comment type="similarity">
    <text evidence="1">Belongs to the transcriptional regulatory Fis family.</text>
</comment>
<keyword id="KW-0010">Activator</keyword>
<keyword id="KW-0238">DNA-binding</keyword>
<keyword id="KW-1185">Reference proteome</keyword>
<keyword id="KW-0804">Transcription</keyword>
<keyword id="KW-0805">Transcription regulation</keyword>
<feature type="chain" id="PRO_0000203890" description="DNA-binding protein Fis">
    <location>
        <begin position="1"/>
        <end position="98"/>
    </location>
</feature>
<feature type="DNA-binding region" description="H-T-H motif" evidence="1">
    <location>
        <begin position="74"/>
        <end position="93"/>
    </location>
</feature>
<protein>
    <recommendedName>
        <fullName evidence="1">DNA-binding protein Fis</fullName>
    </recommendedName>
</protein>
<proteinExistence type="inferred from homology"/>
<name>FIS_PHOPR</name>
<organism>
    <name type="scientific">Photobacterium profundum (strain SS9)</name>
    <dbReference type="NCBI Taxonomy" id="298386"/>
    <lineage>
        <taxon>Bacteria</taxon>
        <taxon>Pseudomonadati</taxon>
        <taxon>Pseudomonadota</taxon>
        <taxon>Gammaproteobacteria</taxon>
        <taxon>Vibrionales</taxon>
        <taxon>Vibrionaceae</taxon>
        <taxon>Photobacterium</taxon>
    </lineage>
</organism>
<evidence type="ECO:0000255" key="1">
    <source>
        <dbReference type="HAMAP-Rule" id="MF_00166"/>
    </source>
</evidence>
<dbReference type="EMBL" id="CR378674">
    <property type="protein sequence ID" value="CAG21695.1"/>
    <property type="molecule type" value="Genomic_DNA"/>
</dbReference>
<dbReference type="RefSeq" id="WP_005372656.1">
    <property type="nucleotide sequence ID" value="NC_006370.1"/>
</dbReference>
<dbReference type="SMR" id="Q6LLY3"/>
<dbReference type="STRING" id="298386.PBPRA3411"/>
<dbReference type="GeneID" id="93550144"/>
<dbReference type="KEGG" id="ppr:PBPRA3411"/>
<dbReference type="eggNOG" id="COG2901">
    <property type="taxonomic scope" value="Bacteria"/>
</dbReference>
<dbReference type="HOGENOM" id="CLU_158040_3_0_6"/>
<dbReference type="Proteomes" id="UP000000593">
    <property type="component" value="Chromosome 1"/>
</dbReference>
<dbReference type="GO" id="GO:0003700">
    <property type="term" value="F:DNA-binding transcription factor activity"/>
    <property type="evidence" value="ECO:0007669"/>
    <property type="project" value="UniProtKB-UniRule"/>
</dbReference>
<dbReference type="GO" id="GO:0043565">
    <property type="term" value="F:sequence-specific DNA binding"/>
    <property type="evidence" value="ECO:0007669"/>
    <property type="project" value="InterPro"/>
</dbReference>
<dbReference type="FunFam" id="1.10.10.60:FF:000006">
    <property type="entry name" value="DNA-binding protein Fis"/>
    <property type="match status" value="1"/>
</dbReference>
<dbReference type="Gene3D" id="1.10.10.60">
    <property type="entry name" value="Homeodomain-like"/>
    <property type="match status" value="1"/>
</dbReference>
<dbReference type="HAMAP" id="MF_00166">
    <property type="entry name" value="DNA_binding_Fis"/>
    <property type="match status" value="1"/>
</dbReference>
<dbReference type="InterPro" id="IPR005412">
    <property type="entry name" value="Fis_DNA-bd"/>
</dbReference>
<dbReference type="InterPro" id="IPR009057">
    <property type="entry name" value="Homeodomain-like_sf"/>
</dbReference>
<dbReference type="InterPro" id="IPR002197">
    <property type="entry name" value="HTH_Fis"/>
</dbReference>
<dbReference type="InterPro" id="IPR050207">
    <property type="entry name" value="Trans_regulatory_Fis"/>
</dbReference>
<dbReference type="NCBIfam" id="NF001659">
    <property type="entry name" value="PRK00430.1"/>
    <property type="match status" value="1"/>
</dbReference>
<dbReference type="PANTHER" id="PTHR47918">
    <property type="entry name" value="DNA-BINDING PROTEIN FIS"/>
    <property type="match status" value="1"/>
</dbReference>
<dbReference type="PANTHER" id="PTHR47918:SF1">
    <property type="entry name" value="DNA-BINDING PROTEIN FIS"/>
    <property type="match status" value="1"/>
</dbReference>
<dbReference type="Pfam" id="PF02954">
    <property type="entry name" value="HTH_8"/>
    <property type="match status" value="1"/>
</dbReference>
<dbReference type="PIRSF" id="PIRSF002097">
    <property type="entry name" value="DNA-binding_Fis"/>
    <property type="match status" value="1"/>
</dbReference>
<dbReference type="PRINTS" id="PR01591">
    <property type="entry name" value="DNABINDNGFIS"/>
</dbReference>
<dbReference type="PRINTS" id="PR01590">
    <property type="entry name" value="HTHFIS"/>
</dbReference>
<dbReference type="SUPFAM" id="SSF46689">
    <property type="entry name" value="Homeodomain-like"/>
    <property type="match status" value="1"/>
</dbReference>